<protein>
    <recommendedName>
        <fullName evidence="1">Thiazole synthase</fullName>
        <ecNumber evidence="1">2.8.1.10</ecNumber>
    </recommendedName>
</protein>
<accession>Q081M2</accession>
<keyword id="KW-0963">Cytoplasm</keyword>
<keyword id="KW-1185">Reference proteome</keyword>
<keyword id="KW-0704">Schiff base</keyword>
<keyword id="KW-0784">Thiamine biosynthesis</keyword>
<keyword id="KW-0808">Transferase</keyword>
<sequence>MLTIADHQFSSRLLTGTGKFSNHNTMLQAIASSGSQLVTLAMKRIDLTRGHDNLLGPLQSMGVKLLPNTAGARNAKEAIFAAELAYEMLGTKWIKLEIHPDPKYLMPDPIETLIAAQHLCEKGYIVMPYVHADPVLCRRLEEVGCAAVMPLGSPIGSNQGLATETFLSIIIEQANIPVIVDAGIGAPSQACRAMEMGAAAVLVNTAIASSANPQQMAKCFADAVATGRQAYLAGLGAVNNHAHATSPLTGFLSEPSISSLAKSVNSKGG</sequence>
<reference key="1">
    <citation type="submission" date="2006-08" db="EMBL/GenBank/DDBJ databases">
        <title>Complete sequence of Shewanella frigidimarina NCIMB 400.</title>
        <authorList>
            <consortium name="US DOE Joint Genome Institute"/>
            <person name="Copeland A."/>
            <person name="Lucas S."/>
            <person name="Lapidus A."/>
            <person name="Barry K."/>
            <person name="Detter J.C."/>
            <person name="Glavina del Rio T."/>
            <person name="Hammon N."/>
            <person name="Israni S."/>
            <person name="Dalin E."/>
            <person name="Tice H."/>
            <person name="Pitluck S."/>
            <person name="Fredrickson J.K."/>
            <person name="Kolker E."/>
            <person name="McCuel L.A."/>
            <person name="DiChristina T."/>
            <person name="Nealson K.H."/>
            <person name="Newman D."/>
            <person name="Tiedje J.M."/>
            <person name="Zhou J."/>
            <person name="Romine M.F."/>
            <person name="Culley D.E."/>
            <person name="Serres M."/>
            <person name="Chertkov O."/>
            <person name="Brettin T."/>
            <person name="Bruce D."/>
            <person name="Han C."/>
            <person name="Tapia R."/>
            <person name="Gilna P."/>
            <person name="Schmutz J."/>
            <person name="Larimer F."/>
            <person name="Land M."/>
            <person name="Hauser L."/>
            <person name="Kyrpides N."/>
            <person name="Mikhailova N."/>
            <person name="Richardson P."/>
        </authorList>
    </citation>
    <scope>NUCLEOTIDE SEQUENCE [LARGE SCALE GENOMIC DNA]</scope>
    <source>
        <strain>NCIMB 400</strain>
    </source>
</reference>
<evidence type="ECO:0000255" key="1">
    <source>
        <dbReference type="HAMAP-Rule" id="MF_00443"/>
    </source>
</evidence>
<name>THIG_SHEFN</name>
<dbReference type="EC" id="2.8.1.10" evidence="1"/>
<dbReference type="EMBL" id="CP000447">
    <property type="protein sequence ID" value="ABI72043.1"/>
    <property type="molecule type" value="Genomic_DNA"/>
</dbReference>
<dbReference type="RefSeq" id="WP_011637653.1">
    <property type="nucleotide sequence ID" value="NC_008345.1"/>
</dbReference>
<dbReference type="SMR" id="Q081M2"/>
<dbReference type="STRING" id="318167.Sfri_2197"/>
<dbReference type="KEGG" id="sfr:Sfri_2197"/>
<dbReference type="eggNOG" id="COG2022">
    <property type="taxonomic scope" value="Bacteria"/>
</dbReference>
<dbReference type="HOGENOM" id="CLU_062233_1_0_6"/>
<dbReference type="OrthoDB" id="9805935at2"/>
<dbReference type="UniPathway" id="UPA00060"/>
<dbReference type="Proteomes" id="UP000000684">
    <property type="component" value="Chromosome"/>
</dbReference>
<dbReference type="GO" id="GO:0005737">
    <property type="term" value="C:cytoplasm"/>
    <property type="evidence" value="ECO:0007669"/>
    <property type="project" value="UniProtKB-SubCell"/>
</dbReference>
<dbReference type="GO" id="GO:1990107">
    <property type="term" value="F:thiazole synthase activity"/>
    <property type="evidence" value="ECO:0007669"/>
    <property type="project" value="UniProtKB-EC"/>
</dbReference>
<dbReference type="GO" id="GO:0009229">
    <property type="term" value="P:thiamine diphosphate biosynthetic process"/>
    <property type="evidence" value="ECO:0007669"/>
    <property type="project" value="UniProtKB-UniRule"/>
</dbReference>
<dbReference type="CDD" id="cd04728">
    <property type="entry name" value="ThiG"/>
    <property type="match status" value="1"/>
</dbReference>
<dbReference type="FunFam" id="3.20.20.70:FF:000049">
    <property type="entry name" value="Thiazole synthase"/>
    <property type="match status" value="1"/>
</dbReference>
<dbReference type="Gene3D" id="3.20.20.70">
    <property type="entry name" value="Aldolase class I"/>
    <property type="match status" value="1"/>
</dbReference>
<dbReference type="HAMAP" id="MF_00443">
    <property type="entry name" value="ThiG"/>
    <property type="match status" value="1"/>
</dbReference>
<dbReference type="InterPro" id="IPR013785">
    <property type="entry name" value="Aldolase_TIM"/>
</dbReference>
<dbReference type="InterPro" id="IPR033983">
    <property type="entry name" value="Thiazole_synthase_ThiG"/>
</dbReference>
<dbReference type="InterPro" id="IPR008867">
    <property type="entry name" value="ThiG"/>
</dbReference>
<dbReference type="PANTHER" id="PTHR34266">
    <property type="entry name" value="THIAZOLE SYNTHASE"/>
    <property type="match status" value="1"/>
</dbReference>
<dbReference type="PANTHER" id="PTHR34266:SF2">
    <property type="entry name" value="THIAZOLE SYNTHASE"/>
    <property type="match status" value="1"/>
</dbReference>
<dbReference type="Pfam" id="PF05690">
    <property type="entry name" value="ThiG"/>
    <property type="match status" value="1"/>
</dbReference>
<dbReference type="SUPFAM" id="SSF110399">
    <property type="entry name" value="ThiG-like"/>
    <property type="match status" value="1"/>
</dbReference>
<proteinExistence type="inferred from homology"/>
<comment type="function">
    <text evidence="1">Catalyzes the rearrangement of 1-deoxy-D-xylulose 5-phosphate (DXP) to produce the thiazole phosphate moiety of thiamine. Sulfur is provided by the thiocarboxylate moiety of the carrier protein ThiS. In vitro, sulfur can be provided by H(2)S.</text>
</comment>
<comment type="catalytic activity">
    <reaction evidence="1">
        <text>[ThiS sulfur-carrier protein]-C-terminal-Gly-aminoethanethioate + 2-iminoacetate + 1-deoxy-D-xylulose 5-phosphate = [ThiS sulfur-carrier protein]-C-terminal Gly-Gly + 2-[(2R,5Z)-2-carboxy-4-methylthiazol-5(2H)-ylidene]ethyl phosphate + 2 H2O + H(+)</text>
        <dbReference type="Rhea" id="RHEA:26297"/>
        <dbReference type="Rhea" id="RHEA-COMP:12909"/>
        <dbReference type="Rhea" id="RHEA-COMP:19908"/>
        <dbReference type="ChEBI" id="CHEBI:15377"/>
        <dbReference type="ChEBI" id="CHEBI:15378"/>
        <dbReference type="ChEBI" id="CHEBI:57792"/>
        <dbReference type="ChEBI" id="CHEBI:62899"/>
        <dbReference type="ChEBI" id="CHEBI:77846"/>
        <dbReference type="ChEBI" id="CHEBI:90778"/>
        <dbReference type="ChEBI" id="CHEBI:232372"/>
        <dbReference type="EC" id="2.8.1.10"/>
    </reaction>
</comment>
<comment type="pathway">
    <text evidence="1">Cofactor biosynthesis; thiamine diphosphate biosynthesis.</text>
</comment>
<comment type="subunit">
    <text evidence="1">Homotetramer. Forms heterodimers with either ThiH or ThiS.</text>
</comment>
<comment type="subcellular location">
    <subcellularLocation>
        <location evidence="1">Cytoplasm</location>
    </subcellularLocation>
</comment>
<comment type="similarity">
    <text evidence="1">Belongs to the ThiG family.</text>
</comment>
<gene>
    <name evidence="1" type="primary">thiG</name>
    <name type="ordered locus">Sfri_2197</name>
</gene>
<feature type="chain" id="PRO_1000026043" description="Thiazole synthase">
    <location>
        <begin position="1"/>
        <end position="269"/>
    </location>
</feature>
<feature type="active site" description="Schiff-base intermediate with DXP" evidence="1">
    <location>
        <position position="95"/>
    </location>
</feature>
<feature type="binding site" evidence="1">
    <location>
        <position position="156"/>
    </location>
    <ligand>
        <name>1-deoxy-D-xylulose 5-phosphate</name>
        <dbReference type="ChEBI" id="CHEBI:57792"/>
    </ligand>
</feature>
<feature type="binding site" evidence="1">
    <location>
        <begin position="182"/>
        <end position="183"/>
    </location>
    <ligand>
        <name>1-deoxy-D-xylulose 5-phosphate</name>
        <dbReference type="ChEBI" id="CHEBI:57792"/>
    </ligand>
</feature>
<feature type="binding site" evidence="1">
    <location>
        <begin position="204"/>
        <end position="205"/>
    </location>
    <ligand>
        <name>1-deoxy-D-xylulose 5-phosphate</name>
        <dbReference type="ChEBI" id="CHEBI:57792"/>
    </ligand>
</feature>
<organism>
    <name type="scientific">Shewanella frigidimarina (strain NCIMB 400)</name>
    <dbReference type="NCBI Taxonomy" id="318167"/>
    <lineage>
        <taxon>Bacteria</taxon>
        <taxon>Pseudomonadati</taxon>
        <taxon>Pseudomonadota</taxon>
        <taxon>Gammaproteobacteria</taxon>
        <taxon>Alteromonadales</taxon>
        <taxon>Shewanellaceae</taxon>
        <taxon>Shewanella</taxon>
    </lineage>
</organism>